<keyword id="KW-0002">3D-structure</keyword>
<keyword id="KW-0238">DNA-binding</keyword>
<keyword id="KW-1185">Reference proteome</keyword>
<keyword id="KW-0731">Sigma factor</keyword>
<keyword id="KW-0804">Transcription</keyword>
<keyword id="KW-0805">Transcription regulation</keyword>
<dbReference type="EMBL" id="U11283">
    <property type="protein sequence ID" value="AAB17906.2"/>
    <property type="molecule type" value="Genomic_DNA"/>
</dbReference>
<dbReference type="EMBL" id="CP000143">
    <property type="protein sequence ID" value="ABA80278.1"/>
    <property type="molecule type" value="Genomic_DNA"/>
</dbReference>
<dbReference type="PIR" id="A58883">
    <property type="entry name" value="A58883"/>
</dbReference>
<dbReference type="RefSeq" id="WP_011338711.1">
    <property type="nucleotide sequence ID" value="NZ_CP030271.1"/>
</dbReference>
<dbReference type="RefSeq" id="YP_354179.1">
    <property type="nucleotide sequence ID" value="NC_007493.2"/>
</dbReference>
<dbReference type="PDB" id="2Q1Z">
    <property type="method" value="X-ray"/>
    <property type="resolution" value="2.40 A"/>
    <property type="chains" value="A/C=1-181"/>
</dbReference>
<dbReference type="PDB" id="2Z2S">
    <property type="method" value="X-ray"/>
    <property type="resolution" value="2.70 A"/>
    <property type="chains" value="A/C/E/G=1-181"/>
</dbReference>
<dbReference type="PDBsum" id="2Q1Z"/>
<dbReference type="PDBsum" id="2Z2S"/>
<dbReference type="SMR" id="Q3IYV6"/>
<dbReference type="STRING" id="272943.RSP_1092"/>
<dbReference type="EnsemblBacteria" id="ABA80278">
    <property type="protein sequence ID" value="ABA80278"/>
    <property type="gene ID" value="RSP_1092"/>
</dbReference>
<dbReference type="GeneID" id="3720851"/>
<dbReference type="KEGG" id="rsp:RSP_1092"/>
<dbReference type="PATRIC" id="fig|272943.9.peg.3071"/>
<dbReference type="eggNOG" id="COG1595">
    <property type="taxonomic scope" value="Bacteria"/>
</dbReference>
<dbReference type="OrthoDB" id="9784272at2"/>
<dbReference type="PhylomeDB" id="Q3IYV6"/>
<dbReference type="EvolutionaryTrace" id="Q3IYV6"/>
<dbReference type="Proteomes" id="UP000002703">
    <property type="component" value="Chromosome 1"/>
</dbReference>
<dbReference type="GO" id="GO:0003677">
    <property type="term" value="F:DNA binding"/>
    <property type="evidence" value="ECO:0007669"/>
    <property type="project" value="UniProtKB-KW"/>
</dbReference>
<dbReference type="GO" id="GO:0016987">
    <property type="term" value="F:sigma factor activity"/>
    <property type="evidence" value="ECO:0007669"/>
    <property type="project" value="UniProtKB-KW"/>
</dbReference>
<dbReference type="GO" id="GO:0006352">
    <property type="term" value="P:DNA-templated transcription initiation"/>
    <property type="evidence" value="ECO:0007669"/>
    <property type="project" value="InterPro"/>
</dbReference>
<dbReference type="CDD" id="cd06171">
    <property type="entry name" value="Sigma70_r4"/>
    <property type="match status" value="1"/>
</dbReference>
<dbReference type="Gene3D" id="1.10.1740.10">
    <property type="match status" value="1"/>
</dbReference>
<dbReference type="Gene3D" id="1.10.10.10">
    <property type="entry name" value="Winged helix-like DNA-binding domain superfamily/Winged helix DNA-binding domain"/>
    <property type="match status" value="1"/>
</dbReference>
<dbReference type="InterPro" id="IPR039425">
    <property type="entry name" value="RNA_pol_sigma-70-like"/>
</dbReference>
<dbReference type="InterPro" id="IPR014284">
    <property type="entry name" value="RNA_pol_sigma-70_dom"/>
</dbReference>
<dbReference type="InterPro" id="IPR007627">
    <property type="entry name" value="RNA_pol_sigma70_r2"/>
</dbReference>
<dbReference type="InterPro" id="IPR007630">
    <property type="entry name" value="RNA_pol_sigma70_r4"/>
</dbReference>
<dbReference type="InterPro" id="IPR013325">
    <property type="entry name" value="RNA_pol_sigma_r2"/>
</dbReference>
<dbReference type="InterPro" id="IPR013324">
    <property type="entry name" value="RNA_pol_sigma_r3/r4-like"/>
</dbReference>
<dbReference type="InterPro" id="IPR036388">
    <property type="entry name" value="WH-like_DNA-bd_sf"/>
</dbReference>
<dbReference type="NCBIfam" id="TIGR02937">
    <property type="entry name" value="sigma70-ECF"/>
    <property type="match status" value="1"/>
</dbReference>
<dbReference type="PANTHER" id="PTHR43133">
    <property type="entry name" value="RNA POLYMERASE ECF-TYPE SIGMA FACTO"/>
    <property type="match status" value="1"/>
</dbReference>
<dbReference type="PANTHER" id="PTHR43133:SF62">
    <property type="entry name" value="RNA POLYMERASE SIGMA FACTOR SIGZ"/>
    <property type="match status" value="1"/>
</dbReference>
<dbReference type="Pfam" id="PF04542">
    <property type="entry name" value="Sigma70_r2"/>
    <property type="match status" value="1"/>
</dbReference>
<dbReference type="Pfam" id="PF04545">
    <property type="entry name" value="Sigma70_r4"/>
    <property type="match status" value="1"/>
</dbReference>
<dbReference type="SUPFAM" id="SSF88946">
    <property type="entry name" value="Sigma2 domain of RNA polymerase sigma factors"/>
    <property type="match status" value="1"/>
</dbReference>
<dbReference type="SUPFAM" id="SSF88659">
    <property type="entry name" value="Sigma3 and sigma4 domains of RNA polymerase sigma factors"/>
    <property type="match status" value="1"/>
</dbReference>
<feature type="chain" id="PRO_0000422739" description="ECF RNA polymerase sigma factor RpoE">
    <location>
        <begin position="1"/>
        <end position="181"/>
    </location>
</feature>
<feature type="DNA-binding region" description="H-T-H motif" evidence="1">
    <location>
        <begin position="151"/>
        <end position="170"/>
    </location>
</feature>
<feature type="region of interest" description="Sigma-70 factor domain-2">
    <location>
        <begin position="29"/>
        <end position="96"/>
    </location>
</feature>
<feature type="region of interest" description="Sigma-70 factor domain-4">
    <location>
        <begin position="129"/>
        <end position="178"/>
    </location>
</feature>
<feature type="short sequence motif" description="Interaction with polymerase core subunit RpoC">
    <location>
        <begin position="53"/>
        <end position="56"/>
    </location>
</feature>
<feature type="helix" evidence="6">
    <location>
        <begin position="10"/>
        <end position="20"/>
    </location>
</feature>
<feature type="helix" evidence="6">
    <location>
        <begin position="23"/>
        <end position="43"/>
    </location>
</feature>
<feature type="helix" evidence="6">
    <location>
        <begin position="48"/>
        <end position="64"/>
    </location>
</feature>
<feature type="helix" evidence="6">
    <location>
        <begin position="66"/>
        <end position="68"/>
    </location>
</feature>
<feature type="turn" evidence="6">
    <location>
        <begin position="71"/>
        <end position="73"/>
    </location>
</feature>
<feature type="helix" evidence="6">
    <location>
        <begin position="76"/>
        <end position="85"/>
    </location>
</feature>
<feature type="turn" evidence="6">
    <location>
        <begin position="90"/>
        <end position="92"/>
    </location>
</feature>
<feature type="strand" evidence="6">
    <location>
        <begin position="94"/>
        <end position="96"/>
    </location>
</feature>
<feature type="helix" evidence="6">
    <location>
        <begin position="113"/>
        <end position="131"/>
    </location>
</feature>
<feature type="helix" evidence="6">
    <location>
        <begin position="135"/>
        <end position="146"/>
    </location>
</feature>
<feature type="turn" evidence="6">
    <location>
        <begin position="155"/>
        <end position="157"/>
    </location>
</feature>
<feature type="helix" evidence="6">
    <location>
        <begin position="163"/>
        <end position="179"/>
    </location>
</feature>
<name>RPOE_CERS4</name>
<accession>Q3IYV6</accession>
<accession>O33546</accession>
<sequence length="181" mass="20703">MTDKSDRTDWVALMRAIRDHRDEAAFAELFQHFAPKVKGFLMKSGSVASQAEECAQDVMATVWQKAHLFDPSRASVATWIFTIARNRRIDGLRKDRQPEPEDLFWGPDSEPDQADVYEMQQENARLGRAIARLPEAQRALIERAFFGDLTHRELAAETGLPLGTIKSRIRLALDRLRQHMS</sequence>
<evidence type="ECO:0000250" key="1"/>
<evidence type="ECO:0000269" key="2">
    <source>
    </source>
</evidence>
<evidence type="ECO:0000269" key="3">
    <source>
    </source>
</evidence>
<evidence type="ECO:0000269" key="4">
    <source>
    </source>
</evidence>
<evidence type="ECO:0000305" key="5"/>
<evidence type="ECO:0007829" key="6">
    <source>
        <dbReference type="PDB" id="2Q1Z"/>
    </source>
</evidence>
<proteinExistence type="evidence at protein level"/>
<organism>
    <name type="scientific">Cereibacter sphaeroides (strain ATCC 17023 / DSM 158 / JCM 6121 / CCUG 31486 / LMG 2827 / NBRC 12203 / NCIMB 8253 / ATH 2.4.1.)</name>
    <name type="common">Rhodobacter sphaeroides</name>
    <dbReference type="NCBI Taxonomy" id="272943"/>
    <lineage>
        <taxon>Bacteria</taxon>
        <taxon>Pseudomonadati</taxon>
        <taxon>Pseudomonadota</taxon>
        <taxon>Alphaproteobacteria</taxon>
        <taxon>Rhodobacterales</taxon>
        <taxon>Paracoccaceae</taxon>
        <taxon>Cereibacter</taxon>
    </lineage>
</organism>
<gene>
    <name type="primary">rpoE</name>
    <name type="ordered locus">RHOS4_27100</name>
    <name type="ORF">RSP_1092</name>
</gene>
<comment type="function">
    <text evidence="2 3 4">Sigma factors are initiation factors that promote the attachment of RNA polymerase to specific initiation sites and are then released. Extracytoplasmic function (ECF) sigma factors are held in an inactive form by a cognate anti-sigma factor until released. Sigma-E controls a transcriptional response to singlet oxygen, a by-product of photosynthesis; its continuous activity requires constant exposure to singlet oxygen. The regulon has about 180 genes that protect against or repair damage induced by singlet oxygen, including itself and rpoH2, a heat shock-responsive sigma factor.</text>
</comment>
<comment type="subunit">
    <text evidence="2 4">Interacts transiently with the RNA polymerase catalytic core formed by RpoA, RpoB, RpoC and RpoZ (2 alpha, 1 beta, 1 beta' and 1 omega subunit) to form the RNA polymerase holoenzyme that can initiate transcription. Forms a 1:1 complex (via sigma-70 factor domain 4) with anti-sigma factor ChrR; this inhibits the interaction of RpoE with the RNA polymerase catalytic core.</text>
</comment>
<comment type="induction">
    <text evidence="3 4">Induced under conditions that produce singlet oxygen (shift from anaerobic photosynthetic to aerobic growth in light). Not induced by H(2)O(2), paraquat (stimulates superoxide formation) or diamide (alters the thiol redox state). Autoregulated. Part of the rpoE-chrR operon.</text>
</comment>
<comment type="domain">
    <text evidence="1">The sigma-70 factor domain-2 mediates sequence-specific interaction with the -10 element in promoter DNA, and plays an important role in melting the double-stranded DNA and the formation of the transcription bubble. The sigma-70 factor domain-2 mediates interaction with the RNA polymerase subunits RpoB and RpoC (By similarity).</text>
</comment>
<comment type="domain">
    <text evidence="1 4 5">The sigma-70 factor domain-4 contains a helix-turn-helix (H-T-H) motif that mediates interaction with the -35 element in promoter DNA. The domain also mediates interaction with the RNA polymerase subunit RpoA (By similarity). Interactions between Sigma-70 factor domain-4 and anti-sigma factors prevents interaction of sigma factors with the RNA polymerase catalytic core (Probable) (PubMed:17803943).</text>
</comment>
<comment type="disruption phenotype">
    <text evidence="3 4">For single rpoE mutant increased sensitivity to singlet oxygen when carotenoid levels are low. For double rpoE-chrR deletion mutant no effect on anaerobic photosynthetic growth. In illuminated aerobically growing cells single and double deletion is bacteriostatic.</text>
</comment>
<comment type="similarity">
    <text evidence="5">Belongs to the sigma-70 factor family. ECF subfamily.</text>
</comment>
<protein>
    <recommendedName>
        <fullName>ECF RNA polymerase sigma factor RpoE</fullName>
    </recommendedName>
    <alternativeName>
        <fullName>Alternative RNA polymerase sigma factor RpoE</fullName>
    </alternativeName>
    <alternativeName>
        <fullName>RNA polymerase sigma-E factor</fullName>
    </alternativeName>
    <alternativeName>
        <fullName>Sigma-24</fullName>
    </alternativeName>
</protein>
<reference key="1">
    <citation type="journal article" date="1995" name="J. Bacteriol.">
        <title>ChrR positively regulates transcription of the Rhodobacter sphaeroides cytochrome c2 gene.</title>
        <authorList>
            <person name="Schilke B.A."/>
            <person name="Donohue T.J."/>
        </authorList>
    </citation>
    <scope>NUCLEOTIDE SEQUENCE [GENOMIC DNA]</scope>
    <source>
        <strain>ATCC 17023 / DSM 158 / JCM 6121 / CCUG 31486 / LMG 2827 / NBRC 12203 / NCIMB 8253 / ATH 2.4.1.</strain>
    </source>
</reference>
<reference key="2">
    <citation type="submission" date="2005-09" db="EMBL/GenBank/DDBJ databases">
        <title>Complete sequence of chromosome 1 of Rhodobacter sphaeroides 2.4.1.</title>
        <authorList>
            <person name="Copeland A."/>
            <person name="Lucas S."/>
            <person name="Lapidus A."/>
            <person name="Barry K."/>
            <person name="Detter J.C."/>
            <person name="Glavina T."/>
            <person name="Hammon N."/>
            <person name="Israni S."/>
            <person name="Pitluck S."/>
            <person name="Richardson P."/>
            <person name="Mackenzie C."/>
            <person name="Choudhary M."/>
            <person name="Larimer F."/>
            <person name="Hauser L.J."/>
            <person name="Land M."/>
            <person name="Donohue T.J."/>
            <person name="Kaplan S."/>
        </authorList>
    </citation>
    <scope>NUCLEOTIDE SEQUENCE [LARGE SCALE GENOMIC DNA]</scope>
    <source>
        <strain>ATCC 17023 / DSM 158 / JCM 6121 / CCUG 31486 / LMG 2827 / NBRC 12203 / NCIMB 8253 / ATH 2.4.1.</strain>
    </source>
</reference>
<reference key="3">
    <citation type="journal article" date="2001" name="J. Mol. Biol.">
        <title>The importance of zinc-binding to the function of Rhodobacter sphaeroides ChrR as an anti-sigma factor.</title>
        <authorList>
            <person name="Newman J.D."/>
            <person name="Anthony J.R."/>
            <person name="Donohue T.J."/>
        </authorList>
    </citation>
    <scope>FUNCTION AS A SIGMA FACTOR</scope>
    <scope>INTERACTION WITH CHRR</scope>
    <scope>SUBUNIT</scope>
    <source>
        <strain>ATCC 17023 / DSM 158 / JCM 6121 / CCUG 31486 / LMG 2827 / NBRC 12203 / NCIMB 8253 / ATH 2.4.1.</strain>
    </source>
</reference>
<reference key="4">
    <citation type="journal article" date="2005" name="Proc. Natl. Acad. Sci. U.S.A.">
        <title>A transcriptional response to singlet oxygen, a toxic byproduct of photosynthesis.</title>
        <authorList>
            <person name="Anthony J.R."/>
            <person name="Warczak K.L."/>
            <person name="Donohue T.J."/>
        </authorList>
    </citation>
    <scope>FUNCTION</scope>
    <scope>INDUCTION</scope>
    <scope>DISRUPTION PHENOTYPE</scope>
    <source>
        <strain>ATCC 17023 / DSM 158 / JCM 6121 / CCUG 31486 / LMG 2827 / NBRC 12203 / NCIMB 8253 / ATH 2.4.1.</strain>
    </source>
</reference>
<reference key="5">
    <citation type="journal article" date="2007" name="Mol. Cell">
        <title>A conserved structural module regulates transcriptional responses to diverse stress signals in bacteria.</title>
        <authorList>
            <person name="Campbell E.A."/>
            <person name="Greenwell R."/>
            <person name="Anthony J.R."/>
            <person name="Wang S."/>
            <person name="Lim L."/>
            <person name="Das K."/>
            <person name="Sofia H.J."/>
            <person name="Donohue T.J."/>
            <person name="Darst S.A."/>
        </authorList>
    </citation>
    <scope>X-RAY CRYSTALLOGRAPHY (2.40 ANGSTROMS)</scope>
    <scope>FUNCTION AS A SIGMA FACTOR</scope>
    <scope>INTERACTION WITH CHRR</scope>
    <scope>INDUCTION</scope>
    <scope>DISRUPTION PHENOTYPE</scope>
    <source>
        <strain>ATCC 17023 / DSM 158 / JCM 6121 / CCUG 31486 / LMG 2827 / NBRC 12203 / NCIMB 8253 / ATH 2.4.1.</strain>
    </source>
</reference>